<protein>
    <recommendedName>
        <fullName evidence="1">tRNA uridine(34) hydroxylase</fullName>
        <ecNumber evidence="1">1.14.-.-</ecNumber>
    </recommendedName>
    <alternativeName>
        <fullName evidence="1">tRNA hydroxylation protein O</fullName>
    </alternativeName>
</protein>
<keyword id="KW-0560">Oxidoreductase</keyword>
<keyword id="KW-1185">Reference proteome</keyword>
<keyword id="KW-0819">tRNA processing</keyword>
<gene>
    <name evidence="1" type="primary">trhO</name>
    <name type="synonym">yceA</name>
    <name type="ordered locus">SDY_2292</name>
</gene>
<evidence type="ECO:0000255" key="1">
    <source>
        <dbReference type="HAMAP-Rule" id="MF_00469"/>
    </source>
</evidence>
<dbReference type="EC" id="1.14.-.-" evidence="1"/>
<dbReference type="EMBL" id="CP000034">
    <property type="protein sequence ID" value="ABB62369.1"/>
    <property type="molecule type" value="Genomic_DNA"/>
</dbReference>
<dbReference type="RefSeq" id="WP_011378794.1">
    <property type="nucleotide sequence ID" value="NC_007606.1"/>
</dbReference>
<dbReference type="RefSeq" id="YP_403860.1">
    <property type="nucleotide sequence ID" value="NC_007606.1"/>
</dbReference>
<dbReference type="SMR" id="Q32E86"/>
<dbReference type="STRING" id="300267.SDY_2292"/>
<dbReference type="EnsemblBacteria" id="ABB62369">
    <property type="protein sequence ID" value="ABB62369"/>
    <property type="gene ID" value="SDY_2292"/>
</dbReference>
<dbReference type="KEGG" id="sdy:SDY_2292"/>
<dbReference type="PATRIC" id="fig|300267.13.peg.2768"/>
<dbReference type="HOGENOM" id="CLU_038878_1_1_6"/>
<dbReference type="Proteomes" id="UP000002716">
    <property type="component" value="Chromosome"/>
</dbReference>
<dbReference type="GO" id="GO:0016705">
    <property type="term" value="F:oxidoreductase activity, acting on paired donors, with incorporation or reduction of molecular oxygen"/>
    <property type="evidence" value="ECO:0007669"/>
    <property type="project" value="UniProtKB-UniRule"/>
</dbReference>
<dbReference type="GO" id="GO:0006400">
    <property type="term" value="P:tRNA modification"/>
    <property type="evidence" value="ECO:0007669"/>
    <property type="project" value="UniProtKB-UniRule"/>
</dbReference>
<dbReference type="CDD" id="cd01518">
    <property type="entry name" value="RHOD_YceA"/>
    <property type="match status" value="1"/>
</dbReference>
<dbReference type="Gene3D" id="3.30.70.100">
    <property type="match status" value="1"/>
</dbReference>
<dbReference type="Gene3D" id="3.40.250.10">
    <property type="entry name" value="Rhodanese-like domain"/>
    <property type="match status" value="1"/>
</dbReference>
<dbReference type="HAMAP" id="MF_00469">
    <property type="entry name" value="TrhO"/>
    <property type="match status" value="1"/>
</dbReference>
<dbReference type="InterPro" id="IPR001763">
    <property type="entry name" value="Rhodanese-like_dom"/>
</dbReference>
<dbReference type="InterPro" id="IPR036873">
    <property type="entry name" value="Rhodanese-like_dom_sf"/>
</dbReference>
<dbReference type="InterPro" id="IPR022111">
    <property type="entry name" value="Rhodanese_C"/>
</dbReference>
<dbReference type="InterPro" id="IPR020936">
    <property type="entry name" value="TrhO"/>
</dbReference>
<dbReference type="InterPro" id="IPR040503">
    <property type="entry name" value="TRHO_N"/>
</dbReference>
<dbReference type="NCBIfam" id="NF001133">
    <property type="entry name" value="PRK00142.1-1"/>
    <property type="match status" value="1"/>
</dbReference>
<dbReference type="PANTHER" id="PTHR43846:SF1">
    <property type="entry name" value="TRNA URIDINE(34) HYDROXYLASE"/>
    <property type="match status" value="1"/>
</dbReference>
<dbReference type="PANTHER" id="PTHR43846">
    <property type="entry name" value="UPF0176 PROTEIN YCEA"/>
    <property type="match status" value="1"/>
</dbReference>
<dbReference type="Pfam" id="PF00581">
    <property type="entry name" value="Rhodanese"/>
    <property type="match status" value="1"/>
</dbReference>
<dbReference type="Pfam" id="PF12368">
    <property type="entry name" value="Rhodanese_C"/>
    <property type="match status" value="1"/>
</dbReference>
<dbReference type="Pfam" id="PF17773">
    <property type="entry name" value="UPF0176_N"/>
    <property type="match status" value="1"/>
</dbReference>
<dbReference type="SMART" id="SM00450">
    <property type="entry name" value="RHOD"/>
    <property type="match status" value="1"/>
</dbReference>
<dbReference type="SUPFAM" id="SSF52821">
    <property type="entry name" value="Rhodanese/Cell cycle control phosphatase"/>
    <property type="match status" value="1"/>
</dbReference>
<dbReference type="PROSITE" id="PS50206">
    <property type="entry name" value="RHODANESE_3"/>
    <property type="match status" value="1"/>
</dbReference>
<proteinExistence type="inferred from homology"/>
<organism>
    <name type="scientific">Shigella dysenteriae serotype 1 (strain Sd197)</name>
    <dbReference type="NCBI Taxonomy" id="300267"/>
    <lineage>
        <taxon>Bacteria</taxon>
        <taxon>Pseudomonadati</taxon>
        <taxon>Pseudomonadota</taxon>
        <taxon>Gammaproteobacteria</taxon>
        <taxon>Enterobacterales</taxon>
        <taxon>Enterobacteriaceae</taxon>
        <taxon>Shigella</taxon>
    </lineage>
</organism>
<reference key="1">
    <citation type="journal article" date="2005" name="Nucleic Acids Res.">
        <title>Genome dynamics and diversity of Shigella species, the etiologic agents of bacillary dysentery.</title>
        <authorList>
            <person name="Yang F."/>
            <person name="Yang J."/>
            <person name="Zhang X."/>
            <person name="Chen L."/>
            <person name="Jiang Y."/>
            <person name="Yan Y."/>
            <person name="Tang X."/>
            <person name="Wang J."/>
            <person name="Xiong Z."/>
            <person name="Dong J."/>
            <person name="Xue Y."/>
            <person name="Zhu Y."/>
            <person name="Xu X."/>
            <person name="Sun L."/>
            <person name="Chen S."/>
            <person name="Nie H."/>
            <person name="Peng J."/>
            <person name="Xu J."/>
            <person name="Wang Y."/>
            <person name="Yuan Z."/>
            <person name="Wen Y."/>
            <person name="Yao Z."/>
            <person name="Shen Y."/>
            <person name="Qiang B."/>
            <person name="Hou Y."/>
            <person name="Yu J."/>
            <person name="Jin Q."/>
        </authorList>
    </citation>
    <scope>NUCLEOTIDE SEQUENCE [LARGE SCALE GENOMIC DNA]</scope>
    <source>
        <strain>Sd197</strain>
    </source>
</reference>
<sequence>MPVLHNRISNDALKAKMLAESEPRTTISFYKYFHIADPKVTRAALYQLFTALNVFGRVYLAHEGMNAQISVPASNVETFRAQLYAFDPALEGLRLNIALDDDGKSFWVLRMKVRDRIVADGIDDPHFDASNVGEYLQAAEVNAMLDDPDALFIDMRNHYEYEVGHFENALEIPADTFREQLPKAVEMMQAHKDKKIVMYCTGGIRCEKASAWMKHNGFNKVWHIEGGIIEYARKAREQGLPVRFIGKNFVFDERMGERISDEIIAHCHQCGAPCDSHTNCKNDGCHLLFIQCPVCAEKYKGCCSEICCEESALPPEEQRRRRAGRENGNKIFNKSRGRLNTTLGIPEPTE</sequence>
<feature type="chain" id="PRO_0000242942" description="tRNA uridine(34) hydroxylase">
    <location>
        <begin position="1"/>
        <end position="350"/>
    </location>
</feature>
<feature type="domain" description="Rhodanese" evidence="1">
    <location>
        <begin position="146"/>
        <end position="240"/>
    </location>
</feature>
<feature type="active site" description="Cysteine persulfide intermediate" evidence="1">
    <location>
        <position position="200"/>
    </location>
</feature>
<accession>Q32E86</accession>
<name>TRHO_SHIDS</name>
<comment type="function">
    <text evidence="1">Catalyzes oxygen-dependent 5-hydroxyuridine (ho5U) modification at position 34 in tRNAs.</text>
</comment>
<comment type="catalytic activity">
    <reaction evidence="1">
        <text>uridine(34) in tRNA + AH2 + O2 = 5-hydroxyuridine(34) in tRNA + A + H2O</text>
        <dbReference type="Rhea" id="RHEA:64224"/>
        <dbReference type="Rhea" id="RHEA-COMP:11727"/>
        <dbReference type="Rhea" id="RHEA-COMP:13381"/>
        <dbReference type="ChEBI" id="CHEBI:13193"/>
        <dbReference type="ChEBI" id="CHEBI:15377"/>
        <dbReference type="ChEBI" id="CHEBI:15379"/>
        <dbReference type="ChEBI" id="CHEBI:17499"/>
        <dbReference type="ChEBI" id="CHEBI:65315"/>
        <dbReference type="ChEBI" id="CHEBI:136877"/>
    </reaction>
</comment>
<comment type="similarity">
    <text evidence="1">Belongs to the TrhO family.</text>
</comment>